<reference key="1">
    <citation type="submission" date="1996-07" db="EMBL/GenBank/DDBJ databases">
        <title>Molecular cloning of caprine TNF-alpha cDNA and its expression in E.coli and insect cells.</title>
        <authorList>
            <person name="Takakura H."/>
            <person name="Mori Y."/>
            <person name="Tatsumi M."/>
        </authorList>
    </citation>
    <scope>NUCLEOTIDE SEQUENCE [MRNA]</scope>
    <source>
        <tissue>Splenocyte</tissue>
    </source>
</reference>
<reference key="2">
    <citation type="submission" date="1989-03" db="EMBL/GenBank/DDBJ databases">
        <authorList>
            <person name="Goldstein I.M."/>
            <person name="Henner D."/>
            <person name="Talhouk A."/>
        </authorList>
    </citation>
    <scope>NUCLEOTIDE SEQUENCE [MRNA] OF 41-234</scope>
</reference>
<reference key="3">
    <citation type="submission" date="2000-06" db="EMBL/GenBank/DDBJ databases">
        <title>Goat ovarian TNF alpha cDNA sequence.</title>
        <authorList>
            <person name="Wang B."/>
            <person name="Zhang Y."/>
        </authorList>
    </citation>
    <scope>NUCLEOTIDE SEQUENCE [MRNA] OF 44-234</scope>
    <source>
        <tissue>Ovarian follicle</tissue>
    </source>
</reference>
<reference key="4">
    <citation type="submission" date="1994-01" db="EMBL/GenBank/DDBJ databases">
        <authorList>
            <person name="Rimstad E."/>
        </authorList>
    </citation>
    <scope>NUCLEOTIDE SEQUENCE [MRNA] OF 75-234</scope>
    <source>
        <tissue>Blood</tissue>
    </source>
</reference>
<protein>
    <recommendedName>
        <fullName>Tumor necrosis factor</fullName>
    </recommendedName>
    <alternativeName>
        <fullName>Cachectin</fullName>
    </alternativeName>
    <alternativeName>
        <fullName>TNF-alpha</fullName>
    </alternativeName>
    <alternativeName>
        <fullName>Tumor necrosis factor ligand superfamily member 2</fullName>
        <shortName>TNF-a</shortName>
    </alternativeName>
    <component>
        <recommendedName>
            <fullName>Tumor necrosis factor, membrane form</fullName>
        </recommendedName>
        <alternativeName>
            <fullName>N-terminal fragment</fullName>
            <shortName>NTF</shortName>
        </alternativeName>
    </component>
    <component>
        <recommendedName>
            <fullName>Intracellular domain 1</fullName>
            <shortName>ICD1</shortName>
        </recommendedName>
    </component>
    <component>
        <recommendedName>
            <fullName>Intracellular domain 2</fullName>
            <shortName>ICD2</shortName>
        </recommendedName>
    </component>
    <component>
        <recommendedName>
            <fullName>C-domain 1</fullName>
        </recommendedName>
    </component>
    <component>
        <recommendedName>
            <fullName>C-domain 2</fullName>
        </recommendedName>
    </component>
    <component>
        <recommendedName>
            <fullName>Tumor necrosis factor, soluble form</fullName>
        </recommendedName>
    </component>
</protein>
<feature type="chain" id="PRO_0000034411" description="Tumor necrosis factor, membrane form">
    <location>
        <begin position="1"/>
        <end position="234"/>
    </location>
</feature>
<feature type="chain" id="PRO_0000417203" description="Intracellular domain 1" evidence="1">
    <location>
        <begin position="1"/>
        <end position="39"/>
    </location>
</feature>
<feature type="chain" id="PRO_0000417204" description="Intracellular domain 2" evidence="1">
    <location>
        <begin position="1"/>
        <end position="35"/>
    </location>
</feature>
<feature type="chain" id="PRO_0000417205" description="C-domain 1" evidence="1">
    <location>
        <begin position="50"/>
        <end status="unknown"/>
    </location>
</feature>
<feature type="chain" id="PRO_0000417206" description="C-domain 2" evidence="1">
    <location>
        <begin position="52"/>
        <end status="unknown"/>
    </location>
</feature>
<feature type="chain" id="PRO_0000034412" description="Tumor necrosis factor, soluble form">
    <location>
        <begin position="79"/>
        <end position="234"/>
    </location>
</feature>
<feature type="topological domain" description="Cytoplasmic" evidence="4">
    <location>
        <begin position="1"/>
        <end position="35"/>
    </location>
</feature>
<feature type="transmembrane region" description="Helical; Signal-anchor for type II membrane protein" evidence="4">
    <location>
        <begin position="36"/>
        <end position="56"/>
    </location>
</feature>
<feature type="topological domain" description="Extracellular" evidence="4">
    <location>
        <begin position="57"/>
        <end position="233"/>
    </location>
</feature>
<feature type="domain" description="THD" evidence="5">
    <location>
        <begin position="89"/>
        <end position="234"/>
    </location>
</feature>
<feature type="site" description="Cleavage; by SPPL2A or SPPL2B" evidence="1">
    <location>
        <begin position="34"/>
        <end position="35"/>
    </location>
</feature>
<feature type="site" description="Cleavage; by SPPL2A or SPPL2B" evidence="1">
    <location>
        <begin position="39"/>
        <end position="40"/>
    </location>
</feature>
<feature type="site" description="Cleavage; by SPPL2A or SPPL2B" evidence="1">
    <location>
        <begin position="49"/>
        <end position="50"/>
    </location>
</feature>
<feature type="site" description="Cleavage; by SPPL2A or SPPL2B" evidence="1">
    <location>
        <begin position="51"/>
        <end position="52"/>
    </location>
</feature>
<feature type="site" description="Cleavage; by ADAM17" evidence="1">
    <location>
        <begin position="78"/>
        <end position="79"/>
    </location>
</feature>
<feature type="modified residue" description="Phosphoserine; by CK1" evidence="1">
    <location>
        <position position="2"/>
    </location>
</feature>
<feature type="lipid moiety-binding region" description="N6-myristoyl lysine" evidence="2">
    <location>
        <position position="19"/>
    </location>
</feature>
<feature type="lipid moiety-binding region" description="N6-myristoyl lysine" evidence="2">
    <location>
        <position position="20"/>
    </location>
</feature>
<feature type="glycosylation site" description="O-linked (GalNAc...) serine; in soluble form" evidence="1">
    <location>
        <position position="81"/>
    </location>
</feature>
<feature type="glycosylation site" description="N-linked (GlcNAc...) asparagine" evidence="4">
    <location>
        <position position="96"/>
    </location>
</feature>
<feature type="disulfide bond" evidence="5">
    <location>
        <begin position="146"/>
        <end position="178"/>
    </location>
</feature>
<feature type="sequence conflict" description="In Ref. 4; CAA54523." evidence="6" ref="4">
    <original>R</original>
    <variation>S</variation>
    <location>
        <position position="79"/>
    </location>
</feature>
<feature type="sequence conflict" description="In Ref. 4; CAA54523." evidence="6" ref="4">
    <original>E</original>
    <variation>A</variation>
    <location>
        <position position="119"/>
    </location>
</feature>
<feature type="sequence conflict" description="In Ref. 4; CAA54523." evidence="6" ref="4">
    <original>T</original>
    <variation>N</variation>
    <location>
        <position position="129"/>
    </location>
</feature>
<feature type="sequence conflict" description="In Ref. 4; CAA54523." evidence="6" ref="4">
    <original>H</original>
    <variation>Q</variation>
    <location>
        <position position="155"/>
    </location>
</feature>
<feature type="sequence conflict" description="In Ref. 4; CAA54523." evidence="6" ref="4">
    <original>Y</original>
    <variation>D</variation>
    <location>
        <position position="164"/>
    </location>
</feature>
<feature type="sequence conflict" description="In Ref. 4." evidence="6" ref="4">
    <original>E</original>
    <variation>EG</variation>
    <location>
        <position position="184"/>
    </location>
</feature>
<feature type="sequence conflict" description="In Ref. 2; CAA32937." evidence="6" ref="2">
    <location>
        <position position="185"/>
    </location>
</feature>
<feature type="sequence conflict" description="In Ref. 3 and 4." evidence="6" ref="3 4">
    <original>Q</original>
    <variation>L</variation>
    <location>
        <position position="215"/>
    </location>
</feature>
<keyword id="KW-1003">Cell membrane</keyword>
<keyword id="KW-0202">Cytokine</keyword>
<keyword id="KW-1015">Disulfide bond</keyword>
<keyword id="KW-0325">Glycoprotein</keyword>
<keyword id="KW-0449">Lipoprotein</keyword>
<keyword id="KW-0472">Membrane</keyword>
<keyword id="KW-0519">Myristate</keyword>
<keyword id="KW-0597">Phosphoprotein</keyword>
<keyword id="KW-1185">Reference proteome</keyword>
<keyword id="KW-0964">Secreted</keyword>
<keyword id="KW-0735">Signal-anchor</keyword>
<keyword id="KW-0812">Transmembrane</keyword>
<keyword id="KW-1133">Transmembrane helix</keyword>
<evidence type="ECO:0000250" key="1"/>
<evidence type="ECO:0000250" key="2">
    <source>
        <dbReference type="UniProtKB" id="P01375"/>
    </source>
</evidence>
<evidence type="ECO:0000250" key="3">
    <source>
        <dbReference type="UniProtKB" id="P06804"/>
    </source>
</evidence>
<evidence type="ECO:0000255" key="4"/>
<evidence type="ECO:0000255" key="5">
    <source>
        <dbReference type="PROSITE-ProRule" id="PRU01387"/>
    </source>
</evidence>
<evidence type="ECO:0000305" key="6"/>
<comment type="function">
    <text evidence="2 3">Cytokine that binds to TNFRSF1A/TNFR1 and TNFRSF1B/TNFBR. It is mainly secreted by macrophages and can induce cell death of certain tumor cell lines. It is potent pyrogen causing fever by direct action or by stimulation of interleukin-1 secretion and is implicated in the induction of cachexia, Under certain conditions it can stimulate cell proliferation and induce cell differentiation (By similarity). Induces insulin resistance in adipocytes via inhibition of insulin-induced IRS1 tyrosine phosphorylation and insulin-induced glucose uptake. Induces GKAP42 protein degradation in adipocytes which is partially responsible for TNF-induced insulin resistance (By similarity). Plays a role in angiogenesis by inducing VEGF production synergistically with IL1B and IL6 (By similarity). Promotes osteoclastogenesis and therefore mediates bone resorption (By similarity).</text>
</comment>
<comment type="function">
    <text evidence="2">The TNF intracellular domain (ICD) form induces IL12 production in dendritic cells.</text>
</comment>
<comment type="subunit">
    <text evidence="1">Homotrimer. Interacts with SPPL2B (By similarity).</text>
</comment>
<comment type="subcellular location">
    <subcellularLocation>
        <location evidence="1">Cell membrane</location>
        <topology evidence="1">Single-pass type II membrane protein</topology>
    </subcellularLocation>
</comment>
<comment type="subcellular location">
    <molecule>Tumor necrosis factor, membrane form</molecule>
    <subcellularLocation>
        <location evidence="1">Membrane</location>
        <topology evidence="1">Single-pass type II membrane protein</topology>
    </subcellularLocation>
</comment>
<comment type="subcellular location">
    <molecule>Tumor necrosis factor, soluble form</molecule>
    <subcellularLocation>
        <location evidence="1">Secreted</location>
    </subcellularLocation>
</comment>
<comment type="subcellular location">
    <molecule>C-domain 1</molecule>
    <subcellularLocation>
        <location evidence="1">Secreted</location>
    </subcellularLocation>
</comment>
<comment type="subcellular location">
    <molecule>C-domain 2</molecule>
    <subcellularLocation>
        <location evidence="1">Secreted</location>
    </subcellularLocation>
</comment>
<comment type="PTM">
    <text evidence="1">The soluble form derives from the membrane form by proteolytic processing. The membrane-bound form is further proteolytically processed by SPPL2A or SPPL2B through regulated intramembrane proteolysis producing TNF intracellular domains (ICD1 and ICD2) released in the cytosol and TNF C-domain 1 and C-domain 2 secreted into the extracellular space (By similarity).</text>
</comment>
<comment type="PTM">
    <text evidence="1">The membrane form, but not the soluble form, is phosphorylated on serine residues. Dephosphorylation of the membrane form occurs by binding to soluble TNFRSF1A/TNFR1 (By similarity).</text>
</comment>
<comment type="PTM">
    <text evidence="1">O-glycosylated; glycans contain galactose, N-acetylgalactosamine and N-acetylneuraminic acid.</text>
</comment>
<comment type="PTM">
    <molecule>Tumor necrosis factor, soluble form</molecule>
    <text evidence="2">The soluble form is demyristoylated by SIRT6, promoting its secretion.</text>
</comment>
<comment type="similarity">
    <text evidence="6">Belongs to the tumor necrosis factor family.</text>
</comment>
<comment type="sequence caution" evidence="6">
    <conflict type="frameshift">
        <sequence resource="EMBL-CDS" id="CAA32937"/>
    </conflict>
</comment>
<proteinExistence type="evidence at transcript level"/>
<sequence length="234" mass="25519">MSTKSMIRDVELAEEVLSKKAGGPQGSRSCWCLSLFSFLLVAGATTLFCLLHFGVIGPQREEQSPAGPSFNRPLVQTLRSSSQASSNKPVAHVVANISAPGQLRWGDSYANALKANGVELKDNQLVVPTDGLYLIYSQVLFRGHGCPSTPLFLTHTISRIAVSYQTKVNILSAIKSPCHRETPEGAEAKPWYEPIYQGGVFQLEKGDRLSAEINQPEYLDYAESGQVYFGIIAL</sequence>
<dbReference type="EMBL" id="D86587">
    <property type="protein sequence ID" value="BAA13130.1"/>
    <property type="molecule type" value="mRNA"/>
</dbReference>
<dbReference type="EMBL" id="X14828">
    <property type="protein sequence ID" value="CAA32937.1"/>
    <property type="status" value="ALT_FRAME"/>
    <property type="molecule type" value="mRNA"/>
</dbReference>
<dbReference type="EMBL" id="AF276985">
    <property type="protein sequence ID" value="AAF87741.1"/>
    <property type="molecule type" value="mRNA"/>
</dbReference>
<dbReference type="EMBL" id="X77317">
    <property type="protein sequence ID" value="CAA54523.1"/>
    <property type="molecule type" value="mRNA"/>
</dbReference>
<dbReference type="PIR" id="S06192">
    <property type="entry name" value="S06192"/>
</dbReference>
<dbReference type="RefSeq" id="NP_001273371.1">
    <property type="nucleotide sequence ID" value="NM_001286442.1"/>
</dbReference>
<dbReference type="SMR" id="P13296"/>
<dbReference type="STRING" id="9925.ENSCHIP00000004561"/>
<dbReference type="GlyCosmos" id="P13296">
    <property type="glycosylation" value="2 sites, No reported glycans"/>
</dbReference>
<dbReference type="GeneID" id="100861232"/>
<dbReference type="KEGG" id="chx:100861232"/>
<dbReference type="CTD" id="7124"/>
<dbReference type="OrthoDB" id="9940698at2759"/>
<dbReference type="Proteomes" id="UP000291000">
    <property type="component" value="Unassembled WGS sequence"/>
</dbReference>
<dbReference type="Proteomes" id="UP000694566">
    <property type="component" value="Unplaced"/>
</dbReference>
<dbReference type="GO" id="GO:0009986">
    <property type="term" value="C:cell surface"/>
    <property type="evidence" value="ECO:0007669"/>
    <property type="project" value="TreeGrafter"/>
</dbReference>
<dbReference type="GO" id="GO:0005615">
    <property type="term" value="C:extracellular space"/>
    <property type="evidence" value="ECO:0007669"/>
    <property type="project" value="UniProtKB-KW"/>
</dbReference>
<dbReference type="GO" id="GO:0005886">
    <property type="term" value="C:plasma membrane"/>
    <property type="evidence" value="ECO:0007669"/>
    <property type="project" value="UniProtKB-SubCell"/>
</dbReference>
<dbReference type="GO" id="GO:0005125">
    <property type="term" value="F:cytokine activity"/>
    <property type="evidence" value="ECO:0007669"/>
    <property type="project" value="UniProtKB-KW"/>
</dbReference>
<dbReference type="GO" id="GO:0005164">
    <property type="term" value="F:tumor necrosis factor receptor binding"/>
    <property type="evidence" value="ECO:0007669"/>
    <property type="project" value="InterPro"/>
</dbReference>
<dbReference type="GO" id="GO:0008625">
    <property type="term" value="P:extrinsic apoptotic signaling pathway via death domain receptors"/>
    <property type="evidence" value="ECO:0007669"/>
    <property type="project" value="TreeGrafter"/>
</dbReference>
<dbReference type="GO" id="GO:0006955">
    <property type="term" value="P:immune response"/>
    <property type="evidence" value="ECO:0007669"/>
    <property type="project" value="InterPro"/>
</dbReference>
<dbReference type="GO" id="GO:0097527">
    <property type="term" value="P:necroptotic signaling pathway"/>
    <property type="evidence" value="ECO:0000250"/>
    <property type="project" value="UniProtKB"/>
</dbReference>
<dbReference type="GO" id="GO:0043242">
    <property type="term" value="P:negative regulation of protein-containing complex disassembly"/>
    <property type="evidence" value="ECO:0000250"/>
    <property type="project" value="UniProtKB"/>
</dbReference>
<dbReference type="GO" id="GO:0043065">
    <property type="term" value="P:positive regulation of apoptotic process"/>
    <property type="evidence" value="ECO:0000250"/>
    <property type="project" value="UniProtKB"/>
</dbReference>
<dbReference type="GO" id="GO:0043123">
    <property type="term" value="P:positive regulation of canonical NF-kappaB signal transduction"/>
    <property type="evidence" value="ECO:0007669"/>
    <property type="project" value="TreeGrafter"/>
</dbReference>
<dbReference type="GO" id="GO:2001238">
    <property type="term" value="P:positive regulation of extrinsic apoptotic signaling pathway"/>
    <property type="evidence" value="ECO:0007669"/>
    <property type="project" value="TreeGrafter"/>
</dbReference>
<dbReference type="GO" id="GO:0043507">
    <property type="term" value="P:positive regulation of JUN kinase activity"/>
    <property type="evidence" value="ECO:0000250"/>
    <property type="project" value="UniProtKB"/>
</dbReference>
<dbReference type="GO" id="GO:0043406">
    <property type="term" value="P:positive regulation of MAP kinase activity"/>
    <property type="evidence" value="ECO:0000250"/>
    <property type="project" value="UniProtKB"/>
</dbReference>
<dbReference type="GO" id="GO:0051092">
    <property type="term" value="P:positive regulation of NF-kappaB transcription factor activity"/>
    <property type="evidence" value="ECO:0000250"/>
    <property type="project" value="UniProtKB"/>
</dbReference>
<dbReference type="GO" id="GO:0001934">
    <property type="term" value="P:positive regulation of protein phosphorylation"/>
    <property type="evidence" value="ECO:0000250"/>
    <property type="project" value="UniProtKB"/>
</dbReference>
<dbReference type="GO" id="GO:0043243">
    <property type="term" value="P:positive regulation of protein-containing complex disassembly"/>
    <property type="evidence" value="ECO:0000250"/>
    <property type="project" value="UniProtKB"/>
</dbReference>
<dbReference type="GO" id="GO:0045944">
    <property type="term" value="P:positive regulation of transcription by RNA polymerase II"/>
    <property type="evidence" value="ECO:0007669"/>
    <property type="project" value="TreeGrafter"/>
</dbReference>
<dbReference type="GO" id="GO:0065008">
    <property type="term" value="P:regulation of biological quality"/>
    <property type="evidence" value="ECO:0007669"/>
    <property type="project" value="UniProtKB-ARBA"/>
</dbReference>
<dbReference type="GO" id="GO:0050793">
    <property type="term" value="P:regulation of developmental process"/>
    <property type="evidence" value="ECO:0007669"/>
    <property type="project" value="UniProtKB-ARBA"/>
</dbReference>
<dbReference type="GO" id="GO:0051239">
    <property type="term" value="P:regulation of multicellular organismal process"/>
    <property type="evidence" value="ECO:0007669"/>
    <property type="project" value="UniProtKB-ARBA"/>
</dbReference>
<dbReference type="GO" id="GO:0051046">
    <property type="term" value="P:regulation of secretion"/>
    <property type="evidence" value="ECO:0007669"/>
    <property type="project" value="UniProtKB-ARBA"/>
</dbReference>
<dbReference type="GO" id="GO:0033209">
    <property type="term" value="P:tumor necrosis factor-mediated signaling pathway"/>
    <property type="evidence" value="ECO:0007669"/>
    <property type="project" value="TreeGrafter"/>
</dbReference>
<dbReference type="GO" id="GO:0010573">
    <property type="term" value="P:vascular endothelial growth factor production"/>
    <property type="evidence" value="ECO:0000250"/>
    <property type="project" value="UniProtKB"/>
</dbReference>
<dbReference type="CDD" id="cd00184">
    <property type="entry name" value="TNF"/>
    <property type="match status" value="1"/>
</dbReference>
<dbReference type="FunFam" id="2.60.120.40:FF:000007">
    <property type="entry name" value="Tumor necrosis factor"/>
    <property type="match status" value="1"/>
</dbReference>
<dbReference type="Gene3D" id="2.60.120.40">
    <property type="match status" value="1"/>
</dbReference>
<dbReference type="InterPro" id="IPR006053">
    <property type="entry name" value="TNF"/>
</dbReference>
<dbReference type="InterPro" id="IPR002959">
    <property type="entry name" value="TNF_alpha"/>
</dbReference>
<dbReference type="InterPro" id="IPR021184">
    <property type="entry name" value="TNF_CS"/>
</dbReference>
<dbReference type="InterPro" id="IPR006052">
    <property type="entry name" value="TNF_dom"/>
</dbReference>
<dbReference type="InterPro" id="IPR008983">
    <property type="entry name" value="Tumour_necrosis_fac-like_dom"/>
</dbReference>
<dbReference type="PANTHER" id="PTHR11471:SF23">
    <property type="entry name" value="TUMOR NECROSIS FACTOR"/>
    <property type="match status" value="1"/>
</dbReference>
<dbReference type="PANTHER" id="PTHR11471">
    <property type="entry name" value="TUMOR NECROSIS FACTOR FAMILY MEMBER"/>
    <property type="match status" value="1"/>
</dbReference>
<dbReference type="Pfam" id="PF00229">
    <property type="entry name" value="TNF"/>
    <property type="match status" value="1"/>
</dbReference>
<dbReference type="PRINTS" id="PR01234">
    <property type="entry name" value="TNECROSISFCT"/>
</dbReference>
<dbReference type="PRINTS" id="PR01235">
    <property type="entry name" value="TNFALPHA"/>
</dbReference>
<dbReference type="SMART" id="SM00207">
    <property type="entry name" value="TNF"/>
    <property type="match status" value="1"/>
</dbReference>
<dbReference type="SUPFAM" id="SSF49842">
    <property type="entry name" value="TNF-like"/>
    <property type="match status" value="1"/>
</dbReference>
<dbReference type="PROSITE" id="PS00251">
    <property type="entry name" value="THD_1"/>
    <property type="match status" value="1"/>
</dbReference>
<dbReference type="PROSITE" id="PS50049">
    <property type="entry name" value="THD_2"/>
    <property type="match status" value="1"/>
</dbReference>
<gene>
    <name type="primary">TNF</name>
    <name type="synonym">TNFA</name>
    <name type="synonym">TNFSF2</name>
</gene>
<accession>P13296</accession>
<accession>Q28320</accession>
<accession>Q9MYZ2</accession>
<name>TNFA_CAPHI</name>
<organism>
    <name type="scientific">Capra hircus</name>
    <name type="common">Goat</name>
    <dbReference type="NCBI Taxonomy" id="9925"/>
    <lineage>
        <taxon>Eukaryota</taxon>
        <taxon>Metazoa</taxon>
        <taxon>Chordata</taxon>
        <taxon>Craniata</taxon>
        <taxon>Vertebrata</taxon>
        <taxon>Euteleostomi</taxon>
        <taxon>Mammalia</taxon>
        <taxon>Eutheria</taxon>
        <taxon>Laurasiatheria</taxon>
        <taxon>Artiodactyla</taxon>
        <taxon>Ruminantia</taxon>
        <taxon>Pecora</taxon>
        <taxon>Bovidae</taxon>
        <taxon>Caprinae</taxon>
        <taxon>Capra</taxon>
    </lineage>
</organism>